<feature type="chain" id="PRO_0000224585" description="Valine--tRNA ligase">
    <location>
        <begin position="1"/>
        <end position="913"/>
    </location>
</feature>
<feature type="coiled-coil region" evidence="1">
    <location>
        <begin position="839"/>
        <end position="907"/>
    </location>
</feature>
<feature type="short sequence motif" description="'HIGH' region">
    <location>
        <begin position="48"/>
        <end position="58"/>
    </location>
</feature>
<feature type="short sequence motif" description="'KMSKS' region">
    <location>
        <begin position="541"/>
        <end position="545"/>
    </location>
</feature>
<feature type="binding site" evidence="1">
    <location>
        <position position="544"/>
    </location>
    <ligand>
        <name>ATP</name>
        <dbReference type="ChEBI" id="CHEBI:30616"/>
    </ligand>
</feature>
<evidence type="ECO:0000255" key="1">
    <source>
        <dbReference type="HAMAP-Rule" id="MF_02004"/>
    </source>
</evidence>
<comment type="function">
    <text evidence="1">Catalyzes the attachment of valine to tRNA(Val). As ValRS can inadvertently accommodate and process structurally similar amino acids such as threonine, to avoid such errors, it has a 'posttransfer' editing activity that hydrolyzes mischarged Thr-tRNA(Val) in a tRNA-dependent manner.</text>
</comment>
<comment type="catalytic activity">
    <reaction evidence="1">
        <text>tRNA(Val) + L-valine + ATP = L-valyl-tRNA(Val) + AMP + diphosphate</text>
        <dbReference type="Rhea" id="RHEA:10704"/>
        <dbReference type="Rhea" id="RHEA-COMP:9672"/>
        <dbReference type="Rhea" id="RHEA-COMP:9708"/>
        <dbReference type="ChEBI" id="CHEBI:30616"/>
        <dbReference type="ChEBI" id="CHEBI:33019"/>
        <dbReference type="ChEBI" id="CHEBI:57762"/>
        <dbReference type="ChEBI" id="CHEBI:78442"/>
        <dbReference type="ChEBI" id="CHEBI:78537"/>
        <dbReference type="ChEBI" id="CHEBI:456215"/>
        <dbReference type="EC" id="6.1.1.9"/>
    </reaction>
</comment>
<comment type="subunit">
    <text evidence="1">Monomer.</text>
</comment>
<comment type="subcellular location">
    <subcellularLocation>
        <location evidence="1">Cytoplasm</location>
    </subcellularLocation>
</comment>
<comment type="domain">
    <text evidence="1">ValRS has two distinct active sites: one for aminoacylation and one for editing. The misactivated threonine is translocated from the active site to the editing site.</text>
</comment>
<comment type="domain">
    <text evidence="1">The C-terminal coiled-coil domain is crucial for aminoacylation activity.</text>
</comment>
<comment type="similarity">
    <text evidence="1">Belongs to the class-I aminoacyl-tRNA synthetase family. ValS type 1 subfamily.</text>
</comment>
<protein>
    <recommendedName>
        <fullName evidence="1">Valine--tRNA ligase</fullName>
        <ecNumber evidence="1">6.1.1.9</ecNumber>
    </recommendedName>
    <alternativeName>
        <fullName evidence="1">Valyl-tRNA synthetase</fullName>
        <shortName evidence="1">ValRS</shortName>
    </alternativeName>
</protein>
<sequence length="913" mass="103194">MTDAITLPSQYDPKQTEAKWQQLWESSGVFHADPNHPGKPYCIVIPPPNVTGSLHMGHAFEHALIDVLIRYHRMIGRNVLWLPGTDHASIAVSTILDQQLQAEGTNRFALGREAYLKRAWAWKESSGKTIVGQIRRLGLSVDWSRERFTMDEGLSRAVLTAFNRLYEAGLIYRGQYLVNWCPASQSAVSDLEVENREVQGHLWYLRYPLTDGSGYLEVATTRPETMLGDTAVAVHPEDDRYRHLIGKTLRLPLMNREIPIIGDPLVDPTFGTGCVKVTPAHDPNDFVMGQRHRLPMMNLMNKDGTLNENAGEFAGLDRFVARKQVVARLEAEGFLVRVEDYKHTVPYSDRGKVPIEPLLSTQWFVKIRPLADAALKALDRQHSPRFIPDRWAKVYRDWLVNLRDWCISRQLWWGHQIPAWYVVSETNGEVRDDTPFVVAMDETAARAKAIAQFGEDIELQQDQDVLDTWFSSGLWPFSTLGWPDDTPDYRRYYPNTTLVTGFDIIFFWVARMTMMGQYFTGKIPFRDVYIHGLVRDENNKKMSKSANNGIDPLILIEKYGTDALRYSLVKEVVGAGQDIRLAYNRKTDESATVEAARNFANKLWNASRFVLLNLEGQTPGQLGTPRRQDLTASDRWILSRYHTAIQTTRERIESYGLGEAAKGLYEFIWGDFCDWYIELVKPRLQGENAKAKRTAQQVLATVLDGTLKLLHPFMPHITEEIWHTLHQVADNEVLAVQPYPKANRRAIDPDLEAQFSLLIETIRTIRNLRAEAGIKPGLYIAALIEASAEEAPIFEAGAADIQHLARLESLTIGSGLQIPQRVFSGVVGKSEVLIPLAGVVDLEALVSKLQKEGDRLRKEIQSLTARLNNPNFVNKAQPEVVAAAQAQLAAAQQQLAIIEHRLQSLGVDDKTQP</sequence>
<accession>Q8DIS8</accession>
<proteinExistence type="inferred from homology"/>
<name>SYV_THEVB</name>
<dbReference type="EC" id="6.1.1.9" evidence="1"/>
<dbReference type="EMBL" id="BA000039">
    <property type="protein sequence ID" value="BAC09055.1"/>
    <property type="molecule type" value="Genomic_DNA"/>
</dbReference>
<dbReference type="RefSeq" id="NP_682293.1">
    <property type="nucleotide sequence ID" value="NC_004113.1"/>
</dbReference>
<dbReference type="RefSeq" id="WP_011057343.1">
    <property type="nucleotide sequence ID" value="NC_004113.1"/>
</dbReference>
<dbReference type="SMR" id="Q8DIS8"/>
<dbReference type="STRING" id="197221.gene:10748103"/>
<dbReference type="EnsemblBacteria" id="BAC09055">
    <property type="protein sequence ID" value="BAC09055"/>
    <property type="gene ID" value="BAC09055"/>
</dbReference>
<dbReference type="KEGG" id="tel:tlr1503"/>
<dbReference type="PATRIC" id="fig|197221.4.peg.1577"/>
<dbReference type="eggNOG" id="COG0525">
    <property type="taxonomic scope" value="Bacteria"/>
</dbReference>
<dbReference type="Proteomes" id="UP000000440">
    <property type="component" value="Chromosome"/>
</dbReference>
<dbReference type="GO" id="GO:0005829">
    <property type="term" value="C:cytosol"/>
    <property type="evidence" value="ECO:0007669"/>
    <property type="project" value="TreeGrafter"/>
</dbReference>
<dbReference type="GO" id="GO:0002161">
    <property type="term" value="F:aminoacyl-tRNA deacylase activity"/>
    <property type="evidence" value="ECO:0007669"/>
    <property type="project" value="InterPro"/>
</dbReference>
<dbReference type="GO" id="GO:0005524">
    <property type="term" value="F:ATP binding"/>
    <property type="evidence" value="ECO:0007669"/>
    <property type="project" value="UniProtKB-UniRule"/>
</dbReference>
<dbReference type="GO" id="GO:0004832">
    <property type="term" value="F:valine-tRNA ligase activity"/>
    <property type="evidence" value="ECO:0007669"/>
    <property type="project" value="UniProtKB-UniRule"/>
</dbReference>
<dbReference type="GO" id="GO:0006438">
    <property type="term" value="P:valyl-tRNA aminoacylation"/>
    <property type="evidence" value="ECO:0007669"/>
    <property type="project" value="UniProtKB-UniRule"/>
</dbReference>
<dbReference type="CDD" id="cd07962">
    <property type="entry name" value="Anticodon_Ia_Val"/>
    <property type="match status" value="1"/>
</dbReference>
<dbReference type="CDD" id="cd00817">
    <property type="entry name" value="ValRS_core"/>
    <property type="match status" value="1"/>
</dbReference>
<dbReference type="FunFam" id="1.10.287.380:FF:000001">
    <property type="entry name" value="Valine--tRNA ligase"/>
    <property type="match status" value="1"/>
</dbReference>
<dbReference type="FunFam" id="1.10.730.10:FF:000014">
    <property type="entry name" value="Valine--tRNA ligase"/>
    <property type="match status" value="1"/>
</dbReference>
<dbReference type="FunFam" id="3.40.50.620:FF:000032">
    <property type="entry name" value="Valine--tRNA ligase"/>
    <property type="match status" value="1"/>
</dbReference>
<dbReference type="FunFam" id="3.40.50.620:FF:000078">
    <property type="entry name" value="Valine--tRNA ligase, mitochondrial"/>
    <property type="match status" value="1"/>
</dbReference>
<dbReference type="FunFam" id="3.90.740.10:FF:000005">
    <property type="entry name" value="Valine--tRNA ligase, mitochondrial"/>
    <property type="match status" value="1"/>
</dbReference>
<dbReference type="Gene3D" id="3.40.50.620">
    <property type="entry name" value="HUPs"/>
    <property type="match status" value="2"/>
</dbReference>
<dbReference type="Gene3D" id="1.10.730.10">
    <property type="entry name" value="Isoleucyl-tRNA Synthetase, Domain 1"/>
    <property type="match status" value="1"/>
</dbReference>
<dbReference type="Gene3D" id="1.10.287.380">
    <property type="entry name" value="Valyl-tRNA synthetase, C-terminal domain"/>
    <property type="match status" value="1"/>
</dbReference>
<dbReference type="Gene3D" id="3.90.740.10">
    <property type="entry name" value="Valyl/Leucyl/Isoleucyl-tRNA synthetase, editing domain"/>
    <property type="match status" value="1"/>
</dbReference>
<dbReference type="HAMAP" id="MF_02004">
    <property type="entry name" value="Val_tRNA_synth_type1"/>
    <property type="match status" value="1"/>
</dbReference>
<dbReference type="InterPro" id="IPR001412">
    <property type="entry name" value="aa-tRNA-synth_I_CS"/>
</dbReference>
<dbReference type="InterPro" id="IPR002300">
    <property type="entry name" value="aa-tRNA-synth_Ia"/>
</dbReference>
<dbReference type="InterPro" id="IPR033705">
    <property type="entry name" value="Anticodon_Ia_Val"/>
</dbReference>
<dbReference type="InterPro" id="IPR013155">
    <property type="entry name" value="M/V/L/I-tRNA-synth_anticd-bd"/>
</dbReference>
<dbReference type="InterPro" id="IPR014729">
    <property type="entry name" value="Rossmann-like_a/b/a_fold"/>
</dbReference>
<dbReference type="InterPro" id="IPR010978">
    <property type="entry name" value="tRNA-bd_arm"/>
</dbReference>
<dbReference type="InterPro" id="IPR009080">
    <property type="entry name" value="tRNAsynth_Ia_anticodon-bd"/>
</dbReference>
<dbReference type="InterPro" id="IPR037118">
    <property type="entry name" value="Val-tRNA_synth_C_sf"/>
</dbReference>
<dbReference type="InterPro" id="IPR019499">
    <property type="entry name" value="Val-tRNA_synth_tRNA-bd"/>
</dbReference>
<dbReference type="InterPro" id="IPR009008">
    <property type="entry name" value="Val/Leu/Ile-tRNA-synth_edit"/>
</dbReference>
<dbReference type="InterPro" id="IPR002303">
    <property type="entry name" value="Valyl-tRNA_ligase"/>
</dbReference>
<dbReference type="NCBIfam" id="NF004349">
    <property type="entry name" value="PRK05729.1"/>
    <property type="match status" value="1"/>
</dbReference>
<dbReference type="NCBIfam" id="TIGR00422">
    <property type="entry name" value="valS"/>
    <property type="match status" value="1"/>
</dbReference>
<dbReference type="PANTHER" id="PTHR11946:SF93">
    <property type="entry name" value="VALINE--TRNA LIGASE, CHLOROPLASTIC_MITOCHONDRIAL 2"/>
    <property type="match status" value="1"/>
</dbReference>
<dbReference type="PANTHER" id="PTHR11946">
    <property type="entry name" value="VALYL-TRNA SYNTHETASES"/>
    <property type="match status" value="1"/>
</dbReference>
<dbReference type="Pfam" id="PF08264">
    <property type="entry name" value="Anticodon_1"/>
    <property type="match status" value="1"/>
</dbReference>
<dbReference type="Pfam" id="PF00133">
    <property type="entry name" value="tRNA-synt_1"/>
    <property type="match status" value="1"/>
</dbReference>
<dbReference type="Pfam" id="PF10458">
    <property type="entry name" value="Val_tRNA-synt_C"/>
    <property type="match status" value="1"/>
</dbReference>
<dbReference type="PRINTS" id="PR00986">
    <property type="entry name" value="TRNASYNTHVAL"/>
</dbReference>
<dbReference type="SUPFAM" id="SSF47323">
    <property type="entry name" value="Anticodon-binding domain of a subclass of class I aminoacyl-tRNA synthetases"/>
    <property type="match status" value="1"/>
</dbReference>
<dbReference type="SUPFAM" id="SSF52374">
    <property type="entry name" value="Nucleotidylyl transferase"/>
    <property type="match status" value="1"/>
</dbReference>
<dbReference type="SUPFAM" id="SSF46589">
    <property type="entry name" value="tRNA-binding arm"/>
    <property type="match status" value="1"/>
</dbReference>
<dbReference type="SUPFAM" id="SSF50677">
    <property type="entry name" value="ValRS/IleRS/LeuRS editing domain"/>
    <property type="match status" value="1"/>
</dbReference>
<dbReference type="PROSITE" id="PS00178">
    <property type="entry name" value="AA_TRNA_LIGASE_I"/>
    <property type="match status" value="1"/>
</dbReference>
<keyword id="KW-0030">Aminoacyl-tRNA synthetase</keyword>
<keyword id="KW-0067">ATP-binding</keyword>
<keyword id="KW-0175">Coiled coil</keyword>
<keyword id="KW-0963">Cytoplasm</keyword>
<keyword id="KW-0436">Ligase</keyword>
<keyword id="KW-0547">Nucleotide-binding</keyword>
<keyword id="KW-0648">Protein biosynthesis</keyword>
<keyword id="KW-1185">Reference proteome</keyword>
<reference key="1">
    <citation type="journal article" date="2002" name="DNA Res.">
        <title>Complete genome structure of the thermophilic cyanobacterium Thermosynechococcus elongatus BP-1.</title>
        <authorList>
            <person name="Nakamura Y."/>
            <person name="Kaneko T."/>
            <person name="Sato S."/>
            <person name="Ikeuchi M."/>
            <person name="Katoh H."/>
            <person name="Sasamoto S."/>
            <person name="Watanabe A."/>
            <person name="Iriguchi M."/>
            <person name="Kawashima K."/>
            <person name="Kimura T."/>
            <person name="Kishida Y."/>
            <person name="Kiyokawa C."/>
            <person name="Kohara M."/>
            <person name="Matsumoto M."/>
            <person name="Matsuno A."/>
            <person name="Nakazaki N."/>
            <person name="Shimpo S."/>
            <person name="Sugimoto M."/>
            <person name="Takeuchi C."/>
            <person name="Yamada M."/>
            <person name="Tabata S."/>
        </authorList>
    </citation>
    <scope>NUCLEOTIDE SEQUENCE [LARGE SCALE GENOMIC DNA]</scope>
    <source>
        <strain>NIES-2133 / IAM M-273 / BP-1</strain>
    </source>
</reference>
<gene>
    <name evidence="1" type="primary">valS</name>
    <name type="ordered locus">tlr1503</name>
</gene>
<organism>
    <name type="scientific">Thermosynechococcus vestitus (strain NIES-2133 / IAM M-273 / BP-1)</name>
    <dbReference type="NCBI Taxonomy" id="197221"/>
    <lineage>
        <taxon>Bacteria</taxon>
        <taxon>Bacillati</taxon>
        <taxon>Cyanobacteriota</taxon>
        <taxon>Cyanophyceae</taxon>
        <taxon>Acaryochloridales</taxon>
        <taxon>Thermosynechococcaceae</taxon>
        <taxon>Thermosynechococcus</taxon>
    </lineage>
</organism>